<reference key="1">
    <citation type="journal article" date="2001" name="Proc. Natl. Acad. Sci. U.S.A.">
        <title>Complete genome sequence of an M1 strain of Streptococcus pyogenes.</title>
        <authorList>
            <person name="Ferretti J.J."/>
            <person name="McShan W.M."/>
            <person name="Ajdic D.J."/>
            <person name="Savic D.J."/>
            <person name="Savic G."/>
            <person name="Lyon K."/>
            <person name="Primeaux C."/>
            <person name="Sezate S."/>
            <person name="Suvorov A.N."/>
            <person name="Kenton S."/>
            <person name="Lai H.S."/>
            <person name="Lin S.P."/>
            <person name="Qian Y."/>
            <person name="Jia H.G."/>
            <person name="Najar F.Z."/>
            <person name="Ren Q."/>
            <person name="Zhu H."/>
            <person name="Song L."/>
            <person name="White J."/>
            <person name="Yuan X."/>
            <person name="Clifton S.W."/>
            <person name="Roe B.A."/>
            <person name="McLaughlin R.E."/>
        </authorList>
    </citation>
    <scope>NUCLEOTIDE SEQUENCE [LARGE SCALE GENOMIC DNA]</scope>
    <source>
        <strain>ATCC 700294 / SF370 / Serotype M1</strain>
    </source>
</reference>
<reference key="2">
    <citation type="journal article" date="2005" name="J. Infect. Dis.">
        <title>Evolutionary origin and emergence of a highly successful clone of serotype M1 group A Streptococcus involved multiple horizontal gene transfer events.</title>
        <authorList>
            <person name="Sumby P."/>
            <person name="Porcella S.F."/>
            <person name="Madrigal A.G."/>
            <person name="Barbian K.D."/>
            <person name="Virtaneva K."/>
            <person name="Ricklefs S.M."/>
            <person name="Sturdevant D.E."/>
            <person name="Graham M.R."/>
            <person name="Vuopio-Varkila J."/>
            <person name="Hoe N.P."/>
            <person name="Musser J.M."/>
        </authorList>
    </citation>
    <scope>NUCLEOTIDE SEQUENCE [LARGE SCALE GENOMIC DNA]</scope>
    <source>
        <strain>ATCC BAA-947 / MGAS5005 / Serotype M1</strain>
    </source>
</reference>
<name>DTD_STRP1</name>
<feature type="chain" id="PRO_0000164603" description="D-aminoacyl-tRNA deacylase">
    <location>
        <begin position="1"/>
        <end position="147"/>
    </location>
</feature>
<feature type="short sequence motif" description="Gly-cisPro motif, important for rejection of L-amino acids" evidence="1">
    <location>
        <begin position="136"/>
        <end position="137"/>
    </location>
</feature>
<sequence length="147" mass="15843">MKLVLQRVKEASVSIDGKIAGAINQGLLLLVGVGPDDNAEDLAYAVRKIVNMRIFSDADGKMNQSIQDIKGSILSVSQFTLYADTKKGNRPAFTGAAKPDLASQLYDSFNEQLAEFVPVERGVFGADMQVSLINDGPVTIILDTKCH</sequence>
<protein>
    <recommendedName>
        <fullName evidence="1">D-aminoacyl-tRNA deacylase</fullName>
        <shortName evidence="1">DTD</shortName>
        <ecNumber evidence="1">3.1.1.96</ecNumber>
    </recommendedName>
    <alternativeName>
        <fullName evidence="1">Gly-tRNA(Ala) deacylase</fullName>
    </alternativeName>
</protein>
<dbReference type="EC" id="3.1.1.96" evidence="1"/>
<dbReference type="EMBL" id="AE004092">
    <property type="protein sequence ID" value="AAK34666.1"/>
    <property type="molecule type" value="Genomic_DNA"/>
</dbReference>
<dbReference type="EMBL" id="CP000017">
    <property type="protein sequence ID" value="AAZ52303.1"/>
    <property type="molecule type" value="Genomic_DNA"/>
</dbReference>
<dbReference type="RefSeq" id="NP_269945.1">
    <property type="nucleotide sequence ID" value="NC_002737.2"/>
</dbReference>
<dbReference type="SMR" id="P63999"/>
<dbReference type="PaxDb" id="1314-HKU360_01801"/>
<dbReference type="KEGG" id="spy:SPy_1980"/>
<dbReference type="KEGG" id="spz:M5005_Spy1685"/>
<dbReference type="PATRIC" id="fig|160490.10.peg.1721"/>
<dbReference type="HOGENOM" id="CLU_076901_1_0_9"/>
<dbReference type="OMA" id="VFGADMK"/>
<dbReference type="Proteomes" id="UP000000750">
    <property type="component" value="Chromosome"/>
</dbReference>
<dbReference type="GO" id="GO:0005737">
    <property type="term" value="C:cytoplasm"/>
    <property type="evidence" value="ECO:0007669"/>
    <property type="project" value="UniProtKB-SubCell"/>
</dbReference>
<dbReference type="GO" id="GO:0051500">
    <property type="term" value="F:D-tyrosyl-tRNA(Tyr) deacylase activity"/>
    <property type="evidence" value="ECO:0007669"/>
    <property type="project" value="TreeGrafter"/>
</dbReference>
<dbReference type="GO" id="GO:0106026">
    <property type="term" value="F:Gly-tRNA(Ala) deacylase activity"/>
    <property type="evidence" value="ECO:0007669"/>
    <property type="project" value="UniProtKB-UniRule"/>
</dbReference>
<dbReference type="GO" id="GO:0043908">
    <property type="term" value="F:Ser(Gly)-tRNA(Ala) hydrolase activity"/>
    <property type="evidence" value="ECO:0007669"/>
    <property type="project" value="UniProtKB-UniRule"/>
</dbReference>
<dbReference type="GO" id="GO:0000049">
    <property type="term" value="F:tRNA binding"/>
    <property type="evidence" value="ECO:0007669"/>
    <property type="project" value="UniProtKB-UniRule"/>
</dbReference>
<dbReference type="GO" id="GO:0019478">
    <property type="term" value="P:D-amino acid catabolic process"/>
    <property type="evidence" value="ECO:0007669"/>
    <property type="project" value="UniProtKB-UniRule"/>
</dbReference>
<dbReference type="CDD" id="cd00563">
    <property type="entry name" value="Dtyr_deacylase"/>
    <property type="match status" value="1"/>
</dbReference>
<dbReference type="FunFam" id="3.50.80.10:FF:000001">
    <property type="entry name" value="D-aminoacyl-tRNA deacylase"/>
    <property type="match status" value="1"/>
</dbReference>
<dbReference type="Gene3D" id="3.50.80.10">
    <property type="entry name" value="D-tyrosyl-tRNA(Tyr) deacylase"/>
    <property type="match status" value="1"/>
</dbReference>
<dbReference type="HAMAP" id="MF_00518">
    <property type="entry name" value="Deacylase_Dtd"/>
    <property type="match status" value="1"/>
</dbReference>
<dbReference type="InterPro" id="IPR003732">
    <property type="entry name" value="Daa-tRNA_deacyls_DTD"/>
</dbReference>
<dbReference type="InterPro" id="IPR023509">
    <property type="entry name" value="DTD-like_sf"/>
</dbReference>
<dbReference type="NCBIfam" id="TIGR00256">
    <property type="entry name" value="D-aminoacyl-tRNA deacylase"/>
    <property type="match status" value="1"/>
</dbReference>
<dbReference type="PANTHER" id="PTHR10472:SF5">
    <property type="entry name" value="D-AMINOACYL-TRNA DEACYLASE 1"/>
    <property type="match status" value="1"/>
</dbReference>
<dbReference type="PANTHER" id="PTHR10472">
    <property type="entry name" value="D-TYROSYL-TRNA TYR DEACYLASE"/>
    <property type="match status" value="1"/>
</dbReference>
<dbReference type="Pfam" id="PF02580">
    <property type="entry name" value="Tyr_Deacylase"/>
    <property type="match status" value="1"/>
</dbReference>
<dbReference type="SUPFAM" id="SSF69500">
    <property type="entry name" value="DTD-like"/>
    <property type="match status" value="1"/>
</dbReference>
<evidence type="ECO:0000255" key="1">
    <source>
        <dbReference type="HAMAP-Rule" id="MF_00518"/>
    </source>
</evidence>
<gene>
    <name evidence="1" type="primary">dtd</name>
    <name type="ordered locus">SPy_1980</name>
    <name type="ordered locus">M5005_Spy1685</name>
</gene>
<organism>
    <name type="scientific">Streptococcus pyogenes serotype M1</name>
    <dbReference type="NCBI Taxonomy" id="301447"/>
    <lineage>
        <taxon>Bacteria</taxon>
        <taxon>Bacillati</taxon>
        <taxon>Bacillota</taxon>
        <taxon>Bacilli</taxon>
        <taxon>Lactobacillales</taxon>
        <taxon>Streptococcaceae</taxon>
        <taxon>Streptococcus</taxon>
    </lineage>
</organism>
<comment type="function">
    <text evidence="1">An aminoacyl-tRNA editing enzyme that deacylates mischarged D-aminoacyl-tRNAs. Also deacylates mischarged glycyl-tRNA(Ala), protecting cells against glycine mischarging by AlaRS. Acts via tRNA-based rather than protein-based catalysis; rejects L-amino acids rather than detecting D-amino acids in the active site. By recycling D-aminoacyl-tRNA to D-amino acids and free tRNA molecules, this enzyme counteracts the toxicity associated with the formation of D-aminoacyl-tRNA entities in vivo and helps enforce protein L-homochirality.</text>
</comment>
<comment type="catalytic activity">
    <reaction evidence="1">
        <text>glycyl-tRNA(Ala) + H2O = tRNA(Ala) + glycine + H(+)</text>
        <dbReference type="Rhea" id="RHEA:53744"/>
        <dbReference type="Rhea" id="RHEA-COMP:9657"/>
        <dbReference type="Rhea" id="RHEA-COMP:13640"/>
        <dbReference type="ChEBI" id="CHEBI:15377"/>
        <dbReference type="ChEBI" id="CHEBI:15378"/>
        <dbReference type="ChEBI" id="CHEBI:57305"/>
        <dbReference type="ChEBI" id="CHEBI:78442"/>
        <dbReference type="ChEBI" id="CHEBI:78522"/>
        <dbReference type="EC" id="3.1.1.96"/>
    </reaction>
</comment>
<comment type="catalytic activity">
    <reaction evidence="1">
        <text>a D-aminoacyl-tRNA + H2O = a tRNA + a D-alpha-amino acid + H(+)</text>
        <dbReference type="Rhea" id="RHEA:13953"/>
        <dbReference type="Rhea" id="RHEA-COMP:10123"/>
        <dbReference type="Rhea" id="RHEA-COMP:10124"/>
        <dbReference type="ChEBI" id="CHEBI:15377"/>
        <dbReference type="ChEBI" id="CHEBI:15378"/>
        <dbReference type="ChEBI" id="CHEBI:59871"/>
        <dbReference type="ChEBI" id="CHEBI:78442"/>
        <dbReference type="ChEBI" id="CHEBI:79333"/>
        <dbReference type="EC" id="3.1.1.96"/>
    </reaction>
</comment>
<comment type="subunit">
    <text evidence="1">Homodimer.</text>
</comment>
<comment type="subcellular location">
    <subcellularLocation>
        <location evidence="1">Cytoplasm</location>
    </subcellularLocation>
</comment>
<comment type="domain">
    <text evidence="1">A Gly-cisPro motif from one monomer fits into the active site of the other monomer to allow specific chiral rejection of L-amino acids.</text>
</comment>
<comment type="similarity">
    <text evidence="1">Belongs to the DTD family.</text>
</comment>
<proteinExistence type="inferred from homology"/>
<keyword id="KW-0963">Cytoplasm</keyword>
<keyword id="KW-0378">Hydrolase</keyword>
<keyword id="KW-1185">Reference proteome</keyword>
<keyword id="KW-0694">RNA-binding</keyword>
<keyword id="KW-0820">tRNA-binding</keyword>
<accession>P63999</accession>
<accession>Q48WH2</accession>
<accession>Q99XX4</accession>